<name>LNT_CHLTR</name>
<sequence length="542" mass="60992">MFKLVSYIILSWVLVCLAQPDVSVVASVVSCICGYSLLWAGLFALVEQLSWKKVWCIAFIWTWTVEGAHFSWMLEDLYVGTSIYFVWGILLSYLATLFASFSCLVVWCCRKQYRGALVWLPGVWVAIEAIRYYGLLSGVSFDFIGWPLTATAYGRQFGSFFGWAGQSFLVIAANICCFAVCLLKHSFSKGLWLTLCAFPYLLGGAHYEYLKKHFSDSEVLRVAIVQPGYSPHMHAGRTASAIWRGLVSLCQTIQTPVDVIVFPEVSVPFGLHRQAYTLHENQPVLESLLPNKSWGEFFTNLDWIQAIAERYQCTVIMGMERWENKGGILHLYNAAECVSREGEITSYDKRILVPGGEYIPGGKIGFSLCQTFFPEFALPFQRLPGEFSGVVNITERIKAGISICYEETFGYAIRPYKRQQADILVNLTNDGWYPRSRLPLVHFYHGMLRNQELGIPCIRACRTGVSAAVDSLGRIVGILPWESRTCPVSTGVLQVSVPLYSYHTVYARLGDAPLLLIAVCSVIGAIAYFYRKKKETPPQTFF</sequence>
<proteinExistence type="inferred from homology"/>
<dbReference type="EC" id="2.3.1.269" evidence="1"/>
<dbReference type="EMBL" id="AE001273">
    <property type="protein sequence ID" value="AAC68136.1"/>
    <property type="molecule type" value="Genomic_DNA"/>
</dbReference>
<dbReference type="PIR" id="E71502">
    <property type="entry name" value="E71502"/>
</dbReference>
<dbReference type="RefSeq" id="WP_010725245.1">
    <property type="nucleotide sequence ID" value="NC_000117.1"/>
</dbReference>
<dbReference type="SMR" id="O84539"/>
<dbReference type="STRING" id="272561.CT_534"/>
<dbReference type="EnsemblBacteria" id="AAC68136">
    <property type="protein sequence ID" value="AAC68136"/>
    <property type="gene ID" value="CT_534"/>
</dbReference>
<dbReference type="KEGG" id="ctr:CT_534"/>
<dbReference type="PATRIC" id="fig|272561.5.peg.579"/>
<dbReference type="HOGENOM" id="CLU_019563_1_2_0"/>
<dbReference type="InParanoid" id="O84539"/>
<dbReference type="OrthoDB" id="9804277at2"/>
<dbReference type="UniPathway" id="UPA00666"/>
<dbReference type="Proteomes" id="UP000000431">
    <property type="component" value="Chromosome"/>
</dbReference>
<dbReference type="GO" id="GO:0005886">
    <property type="term" value="C:plasma membrane"/>
    <property type="evidence" value="ECO:0007669"/>
    <property type="project" value="UniProtKB-SubCell"/>
</dbReference>
<dbReference type="GO" id="GO:0016410">
    <property type="term" value="F:N-acyltransferase activity"/>
    <property type="evidence" value="ECO:0007669"/>
    <property type="project" value="UniProtKB-UniRule"/>
</dbReference>
<dbReference type="GO" id="GO:0050126">
    <property type="term" value="F:N-carbamoylputrescine amidase activity"/>
    <property type="evidence" value="ECO:0000318"/>
    <property type="project" value="GO_Central"/>
</dbReference>
<dbReference type="GO" id="GO:0042158">
    <property type="term" value="P:lipoprotein biosynthetic process"/>
    <property type="evidence" value="ECO:0007669"/>
    <property type="project" value="UniProtKB-UniRule"/>
</dbReference>
<dbReference type="GO" id="GO:0033388">
    <property type="term" value="P:putrescine biosynthetic process from arginine"/>
    <property type="evidence" value="ECO:0000318"/>
    <property type="project" value="GO_Central"/>
</dbReference>
<dbReference type="CDD" id="cd07571">
    <property type="entry name" value="ALP_N-acyl_transferase"/>
    <property type="match status" value="1"/>
</dbReference>
<dbReference type="Gene3D" id="3.60.110.10">
    <property type="entry name" value="Carbon-nitrogen hydrolase"/>
    <property type="match status" value="1"/>
</dbReference>
<dbReference type="HAMAP" id="MF_01148">
    <property type="entry name" value="Lnt"/>
    <property type="match status" value="1"/>
</dbReference>
<dbReference type="InterPro" id="IPR004563">
    <property type="entry name" value="Apolipo_AcylTrfase"/>
</dbReference>
<dbReference type="InterPro" id="IPR003010">
    <property type="entry name" value="C-N_Hydrolase"/>
</dbReference>
<dbReference type="InterPro" id="IPR036526">
    <property type="entry name" value="C-N_Hydrolase_sf"/>
</dbReference>
<dbReference type="InterPro" id="IPR045378">
    <property type="entry name" value="LNT_N"/>
</dbReference>
<dbReference type="NCBIfam" id="TIGR00546">
    <property type="entry name" value="lnt"/>
    <property type="match status" value="1"/>
</dbReference>
<dbReference type="PANTHER" id="PTHR38686">
    <property type="entry name" value="APOLIPOPROTEIN N-ACYLTRANSFERASE"/>
    <property type="match status" value="1"/>
</dbReference>
<dbReference type="PANTHER" id="PTHR38686:SF1">
    <property type="entry name" value="APOLIPOPROTEIN N-ACYLTRANSFERASE"/>
    <property type="match status" value="1"/>
</dbReference>
<dbReference type="Pfam" id="PF00795">
    <property type="entry name" value="CN_hydrolase"/>
    <property type="match status" value="1"/>
</dbReference>
<dbReference type="Pfam" id="PF20154">
    <property type="entry name" value="LNT_N"/>
    <property type="match status" value="1"/>
</dbReference>
<dbReference type="SUPFAM" id="SSF56317">
    <property type="entry name" value="Carbon-nitrogen hydrolase"/>
    <property type="match status" value="1"/>
</dbReference>
<dbReference type="PROSITE" id="PS50263">
    <property type="entry name" value="CN_HYDROLASE"/>
    <property type="match status" value="1"/>
</dbReference>
<feature type="chain" id="PRO_0000178059" description="Apolipoprotein N-acyltransferase">
    <location>
        <begin position="1"/>
        <end position="542"/>
    </location>
</feature>
<feature type="transmembrane region" description="Helical" evidence="1">
    <location>
        <begin position="24"/>
        <end position="44"/>
    </location>
</feature>
<feature type="transmembrane region" description="Helical" evidence="1">
    <location>
        <begin position="54"/>
        <end position="74"/>
    </location>
</feature>
<feature type="transmembrane region" description="Helical" evidence="1">
    <location>
        <begin position="85"/>
        <end position="105"/>
    </location>
</feature>
<feature type="transmembrane region" description="Helical" evidence="1">
    <location>
        <begin position="116"/>
        <end position="136"/>
    </location>
</feature>
<feature type="transmembrane region" description="Helical" evidence="1">
    <location>
        <begin position="160"/>
        <end position="180"/>
    </location>
</feature>
<feature type="transmembrane region" description="Helical" evidence="1">
    <location>
        <begin position="190"/>
        <end position="210"/>
    </location>
</feature>
<feature type="transmembrane region" description="Helical" evidence="1">
    <location>
        <begin position="509"/>
        <end position="529"/>
    </location>
</feature>
<feature type="domain" description="CN hydrolase" evidence="1">
    <location>
        <begin position="220"/>
        <end position="499"/>
    </location>
</feature>
<feature type="active site" description="Proton acceptor" evidence="1">
    <location>
        <position position="264"/>
    </location>
</feature>
<feature type="active site" evidence="1">
    <location>
        <position position="349"/>
    </location>
</feature>
<feature type="active site" description="Nucleophile" evidence="1">
    <location>
        <position position="404"/>
    </location>
</feature>
<evidence type="ECO:0000255" key="1">
    <source>
        <dbReference type="HAMAP-Rule" id="MF_01148"/>
    </source>
</evidence>
<evidence type="ECO:0000305" key="2"/>
<gene>
    <name evidence="1" type="primary">lnt</name>
    <name type="ordered locus">CT_534</name>
</gene>
<organism>
    <name type="scientific">Chlamydia trachomatis serovar D (strain ATCC VR-885 / DSM 19411 / UW-3/Cx)</name>
    <dbReference type="NCBI Taxonomy" id="272561"/>
    <lineage>
        <taxon>Bacteria</taxon>
        <taxon>Pseudomonadati</taxon>
        <taxon>Chlamydiota</taxon>
        <taxon>Chlamydiia</taxon>
        <taxon>Chlamydiales</taxon>
        <taxon>Chlamydiaceae</taxon>
        <taxon>Chlamydia/Chlamydophila group</taxon>
        <taxon>Chlamydia</taxon>
    </lineage>
</organism>
<accession>O84539</accession>
<reference key="1">
    <citation type="journal article" date="1998" name="Science">
        <title>Genome sequence of an obligate intracellular pathogen of humans: Chlamydia trachomatis.</title>
        <authorList>
            <person name="Stephens R.S."/>
            <person name="Kalman S."/>
            <person name="Lammel C.J."/>
            <person name="Fan J."/>
            <person name="Marathe R."/>
            <person name="Aravind L."/>
            <person name="Mitchell W.P."/>
            <person name="Olinger L."/>
            <person name="Tatusov R.L."/>
            <person name="Zhao Q."/>
            <person name="Koonin E.V."/>
            <person name="Davis R.W."/>
        </authorList>
    </citation>
    <scope>NUCLEOTIDE SEQUENCE [LARGE SCALE GENOMIC DNA]</scope>
    <source>
        <strain>ATCC VR-885 / DSM 19411 / UW-3/Cx</strain>
    </source>
</reference>
<comment type="function">
    <text evidence="1">Catalyzes the phospholipid dependent N-acylation of the N-terminal cysteine of apolipoprotein, the last step in lipoprotein maturation.</text>
</comment>
<comment type="catalytic activity">
    <reaction evidence="1">
        <text>N-terminal S-1,2-diacyl-sn-glyceryl-L-cysteinyl-[lipoprotein] + a glycerophospholipid = N-acyl-S-1,2-diacyl-sn-glyceryl-L-cysteinyl-[lipoprotein] + a 2-acyl-sn-glycero-3-phospholipid + H(+)</text>
        <dbReference type="Rhea" id="RHEA:48228"/>
        <dbReference type="Rhea" id="RHEA-COMP:14681"/>
        <dbReference type="Rhea" id="RHEA-COMP:14684"/>
        <dbReference type="ChEBI" id="CHEBI:15378"/>
        <dbReference type="ChEBI" id="CHEBI:136912"/>
        <dbReference type="ChEBI" id="CHEBI:140656"/>
        <dbReference type="ChEBI" id="CHEBI:140657"/>
        <dbReference type="ChEBI" id="CHEBI:140660"/>
        <dbReference type="EC" id="2.3.1.269"/>
    </reaction>
</comment>
<comment type="pathway">
    <text evidence="1">Protein modification; lipoprotein biosynthesis (N-acyl transfer).</text>
</comment>
<comment type="subcellular location">
    <subcellularLocation>
        <location evidence="1">Cell inner membrane</location>
        <topology evidence="1">Multi-pass membrane protein</topology>
    </subcellularLocation>
</comment>
<comment type="similarity">
    <text evidence="1 2">Belongs to the CN hydrolase family. Apolipoprotein N-acyltransferase subfamily.</text>
</comment>
<protein>
    <recommendedName>
        <fullName evidence="1">Apolipoprotein N-acyltransferase</fullName>
        <shortName evidence="1">ALP N-acyltransferase</shortName>
        <ecNumber evidence="1">2.3.1.269</ecNumber>
    </recommendedName>
</protein>
<keyword id="KW-0012">Acyltransferase</keyword>
<keyword id="KW-0997">Cell inner membrane</keyword>
<keyword id="KW-1003">Cell membrane</keyword>
<keyword id="KW-0472">Membrane</keyword>
<keyword id="KW-1185">Reference proteome</keyword>
<keyword id="KW-0808">Transferase</keyword>
<keyword id="KW-0812">Transmembrane</keyword>
<keyword id="KW-1133">Transmembrane helix</keyword>